<name>KAD_FRATM</name>
<proteinExistence type="inferred from homology"/>
<keyword id="KW-0067">ATP-binding</keyword>
<keyword id="KW-0963">Cytoplasm</keyword>
<keyword id="KW-0418">Kinase</keyword>
<keyword id="KW-0545">Nucleotide biosynthesis</keyword>
<keyword id="KW-0547">Nucleotide-binding</keyword>
<keyword id="KW-0808">Transferase</keyword>
<feature type="chain" id="PRO_1000100565" description="Adenylate kinase">
    <location>
        <begin position="1"/>
        <end position="218"/>
    </location>
</feature>
<feature type="region of interest" description="NMP" evidence="1">
    <location>
        <begin position="30"/>
        <end position="59"/>
    </location>
</feature>
<feature type="region of interest" description="LID" evidence="1">
    <location>
        <begin position="122"/>
        <end position="159"/>
    </location>
</feature>
<feature type="binding site" evidence="1">
    <location>
        <begin position="10"/>
        <end position="15"/>
    </location>
    <ligand>
        <name>ATP</name>
        <dbReference type="ChEBI" id="CHEBI:30616"/>
    </ligand>
</feature>
<feature type="binding site" evidence="1">
    <location>
        <position position="31"/>
    </location>
    <ligand>
        <name>AMP</name>
        <dbReference type="ChEBI" id="CHEBI:456215"/>
    </ligand>
</feature>
<feature type="binding site" evidence="1">
    <location>
        <position position="36"/>
    </location>
    <ligand>
        <name>AMP</name>
        <dbReference type="ChEBI" id="CHEBI:456215"/>
    </ligand>
</feature>
<feature type="binding site" evidence="1">
    <location>
        <begin position="57"/>
        <end position="59"/>
    </location>
    <ligand>
        <name>AMP</name>
        <dbReference type="ChEBI" id="CHEBI:456215"/>
    </ligand>
</feature>
<feature type="binding site" evidence="1">
    <location>
        <position position="92"/>
    </location>
    <ligand>
        <name>AMP</name>
        <dbReference type="ChEBI" id="CHEBI:456215"/>
    </ligand>
</feature>
<feature type="binding site" evidence="1">
    <location>
        <position position="123"/>
    </location>
    <ligand>
        <name>ATP</name>
        <dbReference type="ChEBI" id="CHEBI:30616"/>
    </ligand>
</feature>
<feature type="binding site" evidence="1">
    <location>
        <begin position="132"/>
        <end position="133"/>
    </location>
    <ligand>
        <name>ATP</name>
        <dbReference type="ChEBI" id="CHEBI:30616"/>
    </ligand>
</feature>
<feature type="binding site" evidence="1">
    <location>
        <position position="156"/>
    </location>
    <ligand>
        <name>AMP</name>
        <dbReference type="ChEBI" id="CHEBI:456215"/>
    </ligand>
</feature>
<feature type="binding site" evidence="1">
    <location>
        <position position="167"/>
    </location>
    <ligand>
        <name>AMP</name>
        <dbReference type="ChEBI" id="CHEBI:456215"/>
    </ligand>
</feature>
<feature type="binding site" evidence="1">
    <location>
        <position position="202"/>
    </location>
    <ligand>
        <name>ATP</name>
        <dbReference type="ChEBI" id="CHEBI:30616"/>
    </ligand>
</feature>
<protein>
    <recommendedName>
        <fullName evidence="1">Adenylate kinase</fullName>
        <shortName evidence="1">AK</shortName>
        <ecNumber evidence="1">2.7.4.3</ecNumber>
    </recommendedName>
    <alternativeName>
        <fullName evidence="1">ATP-AMP transphosphorylase</fullName>
    </alternativeName>
    <alternativeName>
        <fullName evidence="1">ATP:AMP phosphotransferase</fullName>
    </alternativeName>
    <alternativeName>
        <fullName evidence="1">Adenylate monophosphate kinase</fullName>
    </alternativeName>
</protein>
<organism>
    <name type="scientific">Francisella tularensis subsp. mediasiatica (strain FSC147)</name>
    <dbReference type="NCBI Taxonomy" id="441952"/>
    <lineage>
        <taxon>Bacteria</taxon>
        <taxon>Pseudomonadati</taxon>
        <taxon>Pseudomonadota</taxon>
        <taxon>Gammaproteobacteria</taxon>
        <taxon>Thiotrichales</taxon>
        <taxon>Francisellaceae</taxon>
        <taxon>Francisella</taxon>
    </lineage>
</organism>
<gene>
    <name evidence="1" type="primary">adk</name>
    <name type="ordered locus">FTM_0827</name>
</gene>
<reference key="1">
    <citation type="journal article" date="2009" name="PLoS Pathog.">
        <title>Molecular evolutionary consequences of niche restriction in Francisella tularensis, a facultative intracellular pathogen.</title>
        <authorList>
            <person name="Larsson P."/>
            <person name="Elfsmark D."/>
            <person name="Svensson K."/>
            <person name="Wikstroem P."/>
            <person name="Forsman M."/>
            <person name="Brettin T."/>
            <person name="Keim P."/>
            <person name="Johansson A."/>
        </authorList>
    </citation>
    <scope>NUCLEOTIDE SEQUENCE [LARGE SCALE GENOMIC DNA]</scope>
    <source>
        <strain>FSC147</strain>
    </source>
</reference>
<sequence>MRIILLGAPGAGKGTQAKIIEQKYNIAHISTGDMIRETIKSGSALGQELKKVLDAGELVSDEFIIKIVKDRISKNDCNNGFLLDGVPRTIPQAQELDKLGVNIDYIVEVDVADNLLIERITGRRIHPASGRTYHTKFNPPKVADKDDVTGEPLITRTDDNEDTVKQRLSVYHAQTAKLIDFYRNFSSTNTKIPKYIKINGDQAVEKVSQDIFDQLNKR</sequence>
<evidence type="ECO:0000255" key="1">
    <source>
        <dbReference type="HAMAP-Rule" id="MF_00235"/>
    </source>
</evidence>
<accession>B2SGC2</accession>
<dbReference type="EC" id="2.7.4.3" evidence="1"/>
<dbReference type="EMBL" id="CP000915">
    <property type="protein sequence ID" value="ACD30781.1"/>
    <property type="molecule type" value="Genomic_DNA"/>
</dbReference>
<dbReference type="SMR" id="B2SGC2"/>
<dbReference type="KEGG" id="ftm:FTM_0827"/>
<dbReference type="HOGENOM" id="CLU_032354_1_2_6"/>
<dbReference type="UniPathway" id="UPA00588">
    <property type="reaction ID" value="UER00649"/>
</dbReference>
<dbReference type="GO" id="GO:0005737">
    <property type="term" value="C:cytoplasm"/>
    <property type="evidence" value="ECO:0007669"/>
    <property type="project" value="UniProtKB-SubCell"/>
</dbReference>
<dbReference type="GO" id="GO:0004017">
    <property type="term" value="F:adenylate kinase activity"/>
    <property type="evidence" value="ECO:0007669"/>
    <property type="project" value="UniProtKB-UniRule"/>
</dbReference>
<dbReference type="GO" id="GO:0005524">
    <property type="term" value="F:ATP binding"/>
    <property type="evidence" value="ECO:0007669"/>
    <property type="project" value="UniProtKB-UniRule"/>
</dbReference>
<dbReference type="GO" id="GO:0044209">
    <property type="term" value="P:AMP salvage"/>
    <property type="evidence" value="ECO:0007669"/>
    <property type="project" value="UniProtKB-UniRule"/>
</dbReference>
<dbReference type="CDD" id="cd01428">
    <property type="entry name" value="ADK"/>
    <property type="match status" value="1"/>
</dbReference>
<dbReference type="FunFam" id="3.40.50.300:FF:000106">
    <property type="entry name" value="Adenylate kinase mitochondrial"/>
    <property type="match status" value="1"/>
</dbReference>
<dbReference type="Gene3D" id="3.40.50.300">
    <property type="entry name" value="P-loop containing nucleotide triphosphate hydrolases"/>
    <property type="match status" value="1"/>
</dbReference>
<dbReference type="HAMAP" id="MF_00235">
    <property type="entry name" value="Adenylate_kinase_Adk"/>
    <property type="match status" value="1"/>
</dbReference>
<dbReference type="InterPro" id="IPR006259">
    <property type="entry name" value="Adenyl_kin_sub"/>
</dbReference>
<dbReference type="InterPro" id="IPR000850">
    <property type="entry name" value="Adenylat/UMP-CMP_kin"/>
</dbReference>
<dbReference type="InterPro" id="IPR007862">
    <property type="entry name" value="Adenylate_kinase_lid-dom"/>
</dbReference>
<dbReference type="InterPro" id="IPR027417">
    <property type="entry name" value="P-loop_NTPase"/>
</dbReference>
<dbReference type="NCBIfam" id="TIGR01351">
    <property type="entry name" value="adk"/>
    <property type="match status" value="1"/>
</dbReference>
<dbReference type="NCBIfam" id="NF001379">
    <property type="entry name" value="PRK00279.1-1"/>
    <property type="match status" value="1"/>
</dbReference>
<dbReference type="NCBIfam" id="NF001380">
    <property type="entry name" value="PRK00279.1-2"/>
    <property type="match status" value="1"/>
</dbReference>
<dbReference type="NCBIfam" id="NF001381">
    <property type="entry name" value="PRK00279.1-3"/>
    <property type="match status" value="1"/>
</dbReference>
<dbReference type="PANTHER" id="PTHR23359">
    <property type="entry name" value="NUCLEOTIDE KINASE"/>
    <property type="match status" value="1"/>
</dbReference>
<dbReference type="Pfam" id="PF00406">
    <property type="entry name" value="ADK"/>
    <property type="match status" value="1"/>
</dbReference>
<dbReference type="Pfam" id="PF05191">
    <property type="entry name" value="ADK_lid"/>
    <property type="match status" value="1"/>
</dbReference>
<dbReference type="PRINTS" id="PR00094">
    <property type="entry name" value="ADENYLTKNASE"/>
</dbReference>
<dbReference type="SUPFAM" id="SSF52540">
    <property type="entry name" value="P-loop containing nucleoside triphosphate hydrolases"/>
    <property type="match status" value="1"/>
</dbReference>
<comment type="function">
    <text evidence="1">Catalyzes the reversible transfer of the terminal phosphate group between ATP and AMP. Plays an important role in cellular energy homeostasis and in adenine nucleotide metabolism.</text>
</comment>
<comment type="catalytic activity">
    <reaction evidence="1">
        <text>AMP + ATP = 2 ADP</text>
        <dbReference type="Rhea" id="RHEA:12973"/>
        <dbReference type="ChEBI" id="CHEBI:30616"/>
        <dbReference type="ChEBI" id="CHEBI:456215"/>
        <dbReference type="ChEBI" id="CHEBI:456216"/>
        <dbReference type="EC" id="2.7.4.3"/>
    </reaction>
</comment>
<comment type="pathway">
    <text evidence="1">Purine metabolism; AMP biosynthesis via salvage pathway; AMP from ADP: step 1/1.</text>
</comment>
<comment type="subunit">
    <text evidence="1">Monomer.</text>
</comment>
<comment type="subcellular location">
    <subcellularLocation>
        <location evidence="1">Cytoplasm</location>
    </subcellularLocation>
</comment>
<comment type="domain">
    <text evidence="1">Consists of three domains, a large central CORE domain and two small peripheral domains, NMPbind and LID, which undergo movements during catalysis. The LID domain closes over the site of phosphoryl transfer upon ATP binding. Assembling and dissambling the active center during each catalytic cycle provides an effective means to prevent ATP hydrolysis.</text>
</comment>
<comment type="similarity">
    <text evidence="1">Belongs to the adenylate kinase family.</text>
</comment>